<keyword id="KW-0547">Nucleotide-binding</keyword>
<dbReference type="EMBL" id="CP001277">
    <property type="protein sequence ID" value="ACQ68554.1"/>
    <property type="molecule type" value="Genomic_DNA"/>
</dbReference>
<dbReference type="RefSeq" id="WP_015874313.1">
    <property type="nucleotide sequence ID" value="NC_012751.1"/>
</dbReference>
<dbReference type="SMR" id="C4K7L1"/>
<dbReference type="GeneID" id="66261538"/>
<dbReference type="KEGG" id="hde:HDEF_1968"/>
<dbReference type="eggNOG" id="COG1666">
    <property type="taxonomic scope" value="Bacteria"/>
</dbReference>
<dbReference type="HOGENOM" id="CLU_099839_1_0_6"/>
<dbReference type="Proteomes" id="UP000002334">
    <property type="component" value="Chromosome"/>
</dbReference>
<dbReference type="GO" id="GO:0005829">
    <property type="term" value="C:cytosol"/>
    <property type="evidence" value="ECO:0007669"/>
    <property type="project" value="TreeGrafter"/>
</dbReference>
<dbReference type="GO" id="GO:0000166">
    <property type="term" value="F:nucleotide binding"/>
    <property type="evidence" value="ECO:0007669"/>
    <property type="project" value="TreeGrafter"/>
</dbReference>
<dbReference type="CDD" id="cd11740">
    <property type="entry name" value="YajQ_like"/>
    <property type="match status" value="1"/>
</dbReference>
<dbReference type="FunFam" id="3.30.70.860:FF:000001">
    <property type="entry name" value="UPF0234 protein YajQ"/>
    <property type="match status" value="1"/>
</dbReference>
<dbReference type="FunFam" id="3.30.70.990:FF:000001">
    <property type="entry name" value="UPF0234 protein YajQ"/>
    <property type="match status" value="1"/>
</dbReference>
<dbReference type="Gene3D" id="3.30.70.860">
    <property type="match status" value="1"/>
</dbReference>
<dbReference type="Gene3D" id="3.30.70.990">
    <property type="entry name" value="YajQ-like, domain 2"/>
    <property type="match status" value="1"/>
</dbReference>
<dbReference type="HAMAP" id="MF_00632">
    <property type="entry name" value="YajQ"/>
    <property type="match status" value="1"/>
</dbReference>
<dbReference type="InterPro" id="IPR007551">
    <property type="entry name" value="DUF520"/>
</dbReference>
<dbReference type="InterPro" id="IPR035571">
    <property type="entry name" value="UPF0234-like_C"/>
</dbReference>
<dbReference type="InterPro" id="IPR035570">
    <property type="entry name" value="UPF0234_N"/>
</dbReference>
<dbReference type="InterPro" id="IPR036183">
    <property type="entry name" value="YajQ-like_sf"/>
</dbReference>
<dbReference type="NCBIfam" id="NF003819">
    <property type="entry name" value="PRK05412.1"/>
    <property type="match status" value="1"/>
</dbReference>
<dbReference type="PANTHER" id="PTHR30476">
    <property type="entry name" value="UPF0234 PROTEIN YAJQ"/>
    <property type="match status" value="1"/>
</dbReference>
<dbReference type="PANTHER" id="PTHR30476:SF0">
    <property type="entry name" value="UPF0234 PROTEIN YAJQ"/>
    <property type="match status" value="1"/>
</dbReference>
<dbReference type="Pfam" id="PF04461">
    <property type="entry name" value="DUF520"/>
    <property type="match status" value="1"/>
</dbReference>
<dbReference type="SUPFAM" id="SSF89963">
    <property type="entry name" value="YajQ-like"/>
    <property type="match status" value="2"/>
</dbReference>
<name>Y1968_HAMD5</name>
<proteinExistence type="inferred from homology"/>
<organism>
    <name type="scientific">Hamiltonella defensa subsp. Acyrthosiphon pisum (strain 5AT)</name>
    <dbReference type="NCBI Taxonomy" id="572265"/>
    <lineage>
        <taxon>Bacteria</taxon>
        <taxon>Pseudomonadati</taxon>
        <taxon>Pseudomonadota</taxon>
        <taxon>Gammaproteobacteria</taxon>
        <taxon>Enterobacterales</taxon>
        <taxon>Enterobacteriaceae</taxon>
        <taxon>aphid secondary symbionts</taxon>
        <taxon>Candidatus Hamiltonella</taxon>
    </lineage>
</organism>
<sequence>MPSFDIVSEIDTQEVRNAVENATRDLSTRWDFRHVTARFEFDEKQKSIKVTSESDFQVKQMLEIISEKLAKRGIEGGALDISAEILHSGKTYSLDAKLKQGIESLKAKKLVKLIKDSKLKVQAQIQGEQVRVTGKSRNDLQAVMALIRTGDLGQPFQFNNFRD</sequence>
<accession>C4K7L1</accession>
<evidence type="ECO:0000255" key="1">
    <source>
        <dbReference type="HAMAP-Rule" id="MF_00632"/>
    </source>
</evidence>
<reference key="1">
    <citation type="journal article" date="2009" name="Proc. Natl. Acad. Sci. U.S.A.">
        <title>Hamiltonella defensa, genome evolution of protective bacterial endosymbiont from pathogenic ancestors.</title>
        <authorList>
            <person name="Degnan P.H."/>
            <person name="Yu Y."/>
            <person name="Sisneros N."/>
            <person name="Wing R.A."/>
            <person name="Moran N.A."/>
        </authorList>
    </citation>
    <scope>NUCLEOTIDE SEQUENCE [LARGE SCALE GENOMIC DNA]</scope>
    <source>
        <strain>5AT</strain>
    </source>
</reference>
<gene>
    <name type="ordered locus">HDEF_1968</name>
</gene>
<feature type="chain" id="PRO_1000212337" description="Nucleotide-binding protein HDEF_1968">
    <location>
        <begin position="1"/>
        <end position="163"/>
    </location>
</feature>
<protein>
    <recommendedName>
        <fullName evidence="1">Nucleotide-binding protein HDEF_1968</fullName>
    </recommendedName>
</protein>
<comment type="function">
    <text evidence="1">Nucleotide-binding protein.</text>
</comment>
<comment type="similarity">
    <text evidence="1">Belongs to the YajQ family.</text>
</comment>